<reference key="1">
    <citation type="journal article" date="1992" name="Proc. Natl. Acad. Sci. U.S.A.">
        <title>A family of genes encoding neurotransmitter transporters.</title>
        <authorList>
            <person name="Liu Q.-R."/>
            <person name="Mandiyan S."/>
            <person name="Nelson H."/>
            <person name="Nelson N."/>
        </authorList>
    </citation>
    <scope>NUCLEOTIDE SEQUENCE [GENOMIC DNA / MRNA]</scope>
</reference>
<reference key="2">
    <citation type="journal article" date="2005" name="Science">
        <title>The transcriptional landscape of the mammalian genome.</title>
        <authorList>
            <person name="Carninci P."/>
            <person name="Kasukawa T."/>
            <person name="Katayama S."/>
            <person name="Gough J."/>
            <person name="Frith M.C."/>
            <person name="Maeda N."/>
            <person name="Oyama R."/>
            <person name="Ravasi T."/>
            <person name="Lenhard B."/>
            <person name="Wells C."/>
            <person name="Kodzius R."/>
            <person name="Shimokawa K."/>
            <person name="Bajic V.B."/>
            <person name="Brenner S.E."/>
            <person name="Batalov S."/>
            <person name="Forrest A.R."/>
            <person name="Zavolan M."/>
            <person name="Davis M.J."/>
            <person name="Wilming L.G."/>
            <person name="Aidinis V."/>
            <person name="Allen J.E."/>
            <person name="Ambesi-Impiombato A."/>
            <person name="Apweiler R."/>
            <person name="Aturaliya R.N."/>
            <person name="Bailey T.L."/>
            <person name="Bansal M."/>
            <person name="Baxter L."/>
            <person name="Beisel K.W."/>
            <person name="Bersano T."/>
            <person name="Bono H."/>
            <person name="Chalk A.M."/>
            <person name="Chiu K.P."/>
            <person name="Choudhary V."/>
            <person name="Christoffels A."/>
            <person name="Clutterbuck D.R."/>
            <person name="Crowe M.L."/>
            <person name="Dalla E."/>
            <person name="Dalrymple B.P."/>
            <person name="de Bono B."/>
            <person name="Della Gatta G."/>
            <person name="di Bernardo D."/>
            <person name="Down T."/>
            <person name="Engstrom P."/>
            <person name="Fagiolini M."/>
            <person name="Faulkner G."/>
            <person name="Fletcher C.F."/>
            <person name="Fukushima T."/>
            <person name="Furuno M."/>
            <person name="Futaki S."/>
            <person name="Gariboldi M."/>
            <person name="Georgii-Hemming P."/>
            <person name="Gingeras T.R."/>
            <person name="Gojobori T."/>
            <person name="Green R.E."/>
            <person name="Gustincich S."/>
            <person name="Harbers M."/>
            <person name="Hayashi Y."/>
            <person name="Hensch T.K."/>
            <person name="Hirokawa N."/>
            <person name="Hill D."/>
            <person name="Huminiecki L."/>
            <person name="Iacono M."/>
            <person name="Ikeo K."/>
            <person name="Iwama A."/>
            <person name="Ishikawa T."/>
            <person name="Jakt M."/>
            <person name="Kanapin A."/>
            <person name="Katoh M."/>
            <person name="Kawasawa Y."/>
            <person name="Kelso J."/>
            <person name="Kitamura H."/>
            <person name="Kitano H."/>
            <person name="Kollias G."/>
            <person name="Krishnan S.P."/>
            <person name="Kruger A."/>
            <person name="Kummerfeld S.K."/>
            <person name="Kurochkin I.V."/>
            <person name="Lareau L.F."/>
            <person name="Lazarevic D."/>
            <person name="Lipovich L."/>
            <person name="Liu J."/>
            <person name="Liuni S."/>
            <person name="McWilliam S."/>
            <person name="Madan Babu M."/>
            <person name="Madera M."/>
            <person name="Marchionni L."/>
            <person name="Matsuda H."/>
            <person name="Matsuzawa S."/>
            <person name="Miki H."/>
            <person name="Mignone F."/>
            <person name="Miyake S."/>
            <person name="Morris K."/>
            <person name="Mottagui-Tabar S."/>
            <person name="Mulder N."/>
            <person name="Nakano N."/>
            <person name="Nakauchi H."/>
            <person name="Ng P."/>
            <person name="Nilsson R."/>
            <person name="Nishiguchi S."/>
            <person name="Nishikawa S."/>
            <person name="Nori F."/>
            <person name="Ohara O."/>
            <person name="Okazaki Y."/>
            <person name="Orlando V."/>
            <person name="Pang K.C."/>
            <person name="Pavan W.J."/>
            <person name="Pavesi G."/>
            <person name="Pesole G."/>
            <person name="Petrovsky N."/>
            <person name="Piazza S."/>
            <person name="Reed J."/>
            <person name="Reid J.F."/>
            <person name="Ring B.Z."/>
            <person name="Ringwald M."/>
            <person name="Rost B."/>
            <person name="Ruan Y."/>
            <person name="Salzberg S.L."/>
            <person name="Sandelin A."/>
            <person name="Schneider C."/>
            <person name="Schoenbach C."/>
            <person name="Sekiguchi K."/>
            <person name="Semple C.A."/>
            <person name="Seno S."/>
            <person name="Sessa L."/>
            <person name="Sheng Y."/>
            <person name="Shibata Y."/>
            <person name="Shimada H."/>
            <person name="Shimada K."/>
            <person name="Silva D."/>
            <person name="Sinclair B."/>
            <person name="Sperling S."/>
            <person name="Stupka E."/>
            <person name="Sugiura K."/>
            <person name="Sultana R."/>
            <person name="Takenaka Y."/>
            <person name="Taki K."/>
            <person name="Tammoja K."/>
            <person name="Tan S.L."/>
            <person name="Tang S."/>
            <person name="Taylor M.S."/>
            <person name="Tegner J."/>
            <person name="Teichmann S.A."/>
            <person name="Ueda H.R."/>
            <person name="van Nimwegen E."/>
            <person name="Verardo R."/>
            <person name="Wei C.L."/>
            <person name="Yagi K."/>
            <person name="Yamanishi H."/>
            <person name="Zabarovsky E."/>
            <person name="Zhu S."/>
            <person name="Zimmer A."/>
            <person name="Hide W."/>
            <person name="Bult C."/>
            <person name="Grimmond S.M."/>
            <person name="Teasdale R.D."/>
            <person name="Liu E.T."/>
            <person name="Brusic V."/>
            <person name="Quackenbush J."/>
            <person name="Wahlestedt C."/>
            <person name="Mattick J.S."/>
            <person name="Hume D.A."/>
            <person name="Kai C."/>
            <person name="Sasaki D."/>
            <person name="Tomaru Y."/>
            <person name="Fukuda S."/>
            <person name="Kanamori-Katayama M."/>
            <person name="Suzuki M."/>
            <person name="Aoki J."/>
            <person name="Arakawa T."/>
            <person name="Iida J."/>
            <person name="Imamura K."/>
            <person name="Itoh M."/>
            <person name="Kato T."/>
            <person name="Kawaji H."/>
            <person name="Kawagashira N."/>
            <person name="Kawashima T."/>
            <person name="Kojima M."/>
            <person name="Kondo S."/>
            <person name="Konno H."/>
            <person name="Nakano K."/>
            <person name="Ninomiya N."/>
            <person name="Nishio T."/>
            <person name="Okada M."/>
            <person name="Plessy C."/>
            <person name="Shibata K."/>
            <person name="Shiraki T."/>
            <person name="Suzuki S."/>
            <person name="Tagami M."/>
            <person name="Waki K."/>
            <person name="Watahiki A."/>
            <person name="Okamura-Oho Y."/>
            <person name="Suzuki H."/>
            <person name="Kawai J."/>
            <person name="Hayashizaki Y."/>
        </authorList>
    </citation>
    <scope>NUCLEOTIDE SEQUENCE [LARGE SCALE MRNA]</scope>
    <source>
        <strain>C57BL/6J</strain>
        <tissue>Cerebellum</tissue>
        <tissue>Eye</tissue>
        <tissue>Head</tissue>
    </source>
</reference>
<reference key="3">
    <citation type="journal article" date="1993" name="J. Biol. Chem.">
        <title>Molecular characterization of four pharmacologically distinct gamma-aminobutyric acid transporters in mouse brain.</title>
        <authorList>
            <person name="Liu Q.-R."/>
            <person name="Lopez-Coecuera B."/>
            <person name="Mandiyan S."/>
            <person name="Nelson H."/>
            <person name="Nelson N."/>
        </authorList>
    </citation>
    <scope>FUNCTION</scope>
    <scope>TRANSPORTER ACTIVITY</scope>
    <scope>ACTIVITY REGULATION</scope>
</reference>
<reference key="4">
    <citation type="journal article" date="2004" name="Mol. Cell. Neurosci.">
        <title>The GABA transporter GAT1 and the MAGUK protein Pals1: interaction, uptake modulation, and coexpression in the brain.</title>
        <authorList>
            <person name="McHugh E.M."/>
            <person name="Zhu W."/>
            <person name="Milgram S."/>
            <person name="Mager S."/>
        </authorList>
    </citation>
    <scope>FUNCTION</scope>
    <scope>TRANSPORTER ACTIVITY</scope>
    <scope>INTERACTION WITH PALS1</scope>
    <scope>TISSUE SPECIFICITY</scope>
    <scope>SUBCELLULAR LOCATION</scope>
</reference>
<reference key="5">
    <citation type="journal article" date="2005" name="Mol. Pharmacol.">
        <title>Identification and selective inhibition of the channel mode of the neuronal GABA transporter 1.</title>
        <authorList>
            <person name="Krause S."/>
            <person name="Schwarz W."/>
        </authorList>
    </citation>
    <scope>FUNCTION</scope>
    <scope>TRANSPORTER ACTIVITY</scope>
    <scope>BIOPHYSICOCHEMICAL PROPERTIES</scope>
    <scope>ACTIVITY REGULATION</scope>
</reference>
<reference key="6">
    <citation type="journal article" date="2010" name="Cell">
        <title>A tissue-specific atlas of mouse protein phosphorylation and expression.</title>
        <authorList>
            <person name="Huttlin E.L."/>
            <person name="Jedrychowski M.P."/>
            <person name="Elias J.E."/>
            <person name="Goswami T."/>
            <person name="Rad R."/>
            <person name="Beausoleil S.A."/>
            <person name="Villen J."/>
            <person name="Haas W."/>
            <person name="Sowa M.E."/>
            <person name="Gygi S.P."/>
        </authorList>
    </citation>
    <scope>PHOSPHORYLATION [LARGE SCALE ANALYSIS] AT SER-18 AND SER-591</scope>
    <scope>IDENTIFICATION BY MASS SPECTROMETRY [LARGE SCALE ANALYSIS]</scope>
    <source>
        <tissue>Brain</tissue>
    </source>
</reference>
<reference key="7">
    <citation type="journal article" date="2018" name="Biol. Pharm. Bull.">
        <title>Hypotaurine Is a Substrate of GABA Transporter Family Members GAT2/Slc6a13 and TAUT/Slc6a6.</title>
        <authorList>
            <person name="Nishimura T."/>
            <person name="Higuchi K."/>
            <person name="Yoshida Y."/>
            <person name="Sugita-Fujisawa Y."/>
            <person name="Kojima K."/>
            <person name="Sugimoto M."/>
            <person name="Santo M."/>
            <person name="Tomi M."/>
            <person name="Nakashima E."/>
        </authorList>
    </citation>
    <scope>FUNCTION</scope>
    <scope>TRANSPORTER ACTIVITY</scope>
</reference>
<evidence type="ECO:0000250" key="1">
    <source>
        <dbReference type="UniProtKB" id="P23978"/>
    </source>
</evidence>
<evidence type="ECO:0000250" key="2">
    <source>
        <dbReference type="UniProtKB" id="Q7K4Y6"/>
    </source>
</evidence>
<evidence type="ECO:0000255" key="3"/>
<evidence type="ECO:0000256" key="4">
    <source>
        <dbReference type="SAM" id="MobiDB-lite"/>
    </source>
</evidence>
<evidence type="ECO:0000269" key="5">
    <source>
    </source>
</evidence>
<evidence type="ECO:0000269" key="6">
    <source>
    </source>
</evidence>
<evidence type="ECO:0000269" key="7">
    <source>
    </source>
</evidence>
<evidence type="ECO:0000269" key="8">
    <source>
    </source>
</evidence>
<evidence type="ECO:0000305" key="9"/>
<evidence type="ECO:0000305" key="10">
    <source>
    </source>
</evidence>
<evidence type="ECO:0000305" key="11">
    <source>
    </source>
</evidence>
<evidence type="ECO:0007744" key="12">
    <source>
    </source>
</evidence>
<feature type="chain" id="PRO_0000214744" description="Sodium- and chloride-dependent GABA transporter 1">
    <location>
        <begin position="1"/>
        <end position="599"/>
    </location>
</feature>
<feature type="topological domain" description="Cytoplasmic" evidence="1">
    <location>
        <begin position="1"/>
        <end position="52"/>
    </location>
</feature>
<feature type="transmembrane region" description="Helical; Name=1" evidence="3">
    <location>
        <begin position="53"/>
        <end position="73"/>
    </location>
</feature>
<feature type="topological domain" description="Extracellular" evidence="1">
    <location>
        <begin position="74"/>
        <end position="80"/>
    </location>
</feature>
<feature type="transmembrane region" description="Helical; Name=2" evidence="3">
    <location>
        <begin position="81"/>
        <end position="100"/>
    </location>
</feature>
<feature type="topological domain" description="Cytoplasmic" evidence="1">
    <location>
        <begin position="101"/>
        <end position="123"/>
    </location>
</feature>
<feature type="transmembrane region" description="Helical; Name=3" evidence="3">
    <location>
        <begin position="124"/>
        <end position="144"/>
    </location>
</feature>
<feature type="topological domain" description="Extracellular" evidence="1">
    <location>
        <begin position="145"/>
        <end position="211"/>
    </location>
</feature>
<feature type="transmembrane region" description="Helical; Name=4" evidence="3">
    <location>
        <begin position="212"/>
        <end position="230"/>
    </location>
</feature>
<feature type="topological domain" description="Cytoplasmic" evidence="1">
    <location>
        <begin position="231"/>
        <end position="238"/>
    </location>
</feature>
<feature type="transmembrane region" description="Helical; Name=5" evidence="3">
    <location>
        <begin position="239"/>
        <end position="256"/>
    </location>
</feature>
<feature type="topological domain" description="Extracellular" evidence="1">
    <location>
        <begin position="257"/>
        <end position="291"/>
    </location>
</feature>
<feature type="transmembrane region" description="Helical; Name=6" evidence="3">
    <location>
        <begin position="292"/>
        <end position="309"/>
    </location>
</feature>
<feature type="topological domain" description="Cytoplasmic" evidence="1">
    <location>
        <begin position="310"/>
        <end position="320"/>
    </location>
</feature>
<feature type="transmembrane region" description="Helical; Name=7" evidence="3">
    <location>
        <begin position="321"/>
        <end position="342"/>
    </location>
</feature>
<feature type="topological domain" description="Extracellular" evidence="1">
    <location>
        <begin position="343"/>
        <end position="374"/>
    </location>
</feature>
<feature type="transmembrane region" description="Helical; Name=8" evidence="3">
    <location>
        <begin position="375"/>
        <end position="394"/>
    </location>
</feature>
<feature type="topological domain" description="Cytoplasmic" evidence="1">
    <location>
        <begin position="395"/>
        <end position="421"/>
    </location>
</feature>
<feature type="transmembrane region" description="Helical; Name=9" evidence="3">
    <location>
        <begin position="422"/>
        <end position="440"/>
    </location>
</feature>
<feature type="topological domain" description="Extracellular" evidence="1">
    <location>
        <begin position="441"/>
        <end position="456"/>
    </location>
</feature>
<feature type="transmembrane region" description="Helical; Name=10" evidence="3">
    <location>
        <begin position="457"/>
        <end position="477"/>
    </location>
</feature>
<feature type="topological domain" description="Cytoplasmic" evidence="1">
    <location>
        <begin position="478"/>
        <end position="497"/>
    </location>
</feature>
<feature type="transmembrane region" description="Helical; Name=11" evidence="3">
    <location>
        <begin position="498"/>
        <end position="517"/>
    </location>
</feature>
<feature type="topological domain" description="Extracellular" evidence="1">
    <location>
        <begin position="518"/>
        <end position="535"/>
    </location>
</feature>
<feature type="transmembrane region" description="Helical; Name=12" evidence="3">
    <location>
        <begin position="536"/>
        <end position="554"/>
    </location>
</feature>
<feature type="topological domain" description="Cytoplasmic" evidence="1">
    <location>
        <begin position="555"/>
        <end position="599"/>
    </location>
</feature>
<feature type="region of interest" description="Disordered" evidence="4">
    <location>
        <begin position="1"/>
        <end position="23"/>
    </location>
</feature>
<feature type="region of interest" description="Disordered" evidence="4">
    <location>
        <begin position="577"/>
        <end position="599"/>
    </location>
</feature>
<feature type="short sequence motif" description="PDZ-binding">
    <location>
        <begin position="597"/>
        <end position="599"/>
    </location>
</feature>
<feature type="compositionally biased region" description="Polar residues" evidence="4">
    <location>
        <begin position="1"/>
        <end position="17"/>
    </location>
</feature>
<feature type="compositionally biased region" description="Polar residues" evidence="4">
    <location>
        <begin position="588"/>
        <end position="599"/>
    </location>
</feature>
<feature type="binding site" evidence="2">
    <location>
        <position position="59"/>
    </location>
    <ligand>
        <name>Na(+)</name>
        <dbReference type="ChEBI" id="CHEBI:29101"/>
        <label>1</label>
    </ligand>
</feature>
<feature type="binding site" evidence="2">
    <location>
        <position position="61"/>
    </location>
    <ligand>
        <name>Na(+)</name>
        <dbReference type="ChEBI" id="CHEBI:29101"/>
        <label>2</label>
    </ligand>
</feature>
<feature type="binding site" evidence="2">
    <location>
        <position position="62"/>
    </location>
    <ligand>
        <name>Na(+)</name>
        <dbReference type="ChEBI" id="CHEBI:29101"/>
        <label>1</label>
    </ligand>
</feature>
<feature type="binding site" evidence="2">
    <location>
        <position position="66"/>
    </location>
    <ligand>
        <name>Na(+)</name>
        <dbReference type="ChEBI" id="CHEBI:29101"/>
        <label>2</label>
    </ligand>
</feature>
<feature type="binding site" evidence="2">
    <location>
        <position position="295"/>
    </location>
    <ligand>
        <name>Na(+)</name>
        <dbReference type="ChEBI" id="CHEBI:29101"/>
        <label>2</label>
    </ligand>
</feature>
<feature type="binding site" evidence="2">
    <location>
        <position position="327"/>
    </location>
    <ligand>
        <name>Na(+)</name>
        <dbReference type="ChEBI" id="CHEBI:29101"/>
        <label>2</label>
    </ligand>
</feature>
<feature type="binding site" evidence="2">
    <location>
        <position position="392"/>
    </location>
    <ligand>
        <name>Na(+)</name>
        <dbReference type="ChEBI" id="CHEBI:29101"/>
        <label>1</label>
    </ligand>
</feature>
<feature type="binding site" evidence="2">
    <location>
        <position position="395"/>
    </location>
    <ligand>
        <name>Na(+)</name>
        <dbReference type="ChEBI" id="CHEBI:29101"/>
        <label>1</label>
    </ligand>
</feature>
<feature type="binding site" evidence="2">
    <location>
        <position position="396"/>
    </location>
    <ligand>
        <name>Na(+)</name>
        <dbReference type="ChEBI" id="CHEBI:29101"/>
        <label>1</label>
    </ligand>
</feature>
<feature type="modified residue" description="Phosphoserine" evidence="12">
    <location>
        <position position="18"/>
    </location>
</feature>
<feature type="modified residue" description="Phosphoserine" evidence="12">
    <location>
        <position position="591"/>
    </location>
</feature>
<feature type="glycosylation site" description="N-linked (GlcNAc...) asparagine" evidence="3">
    <location>
        <position position="176"/>
    </location>
</feature>
<feature type="glycosylation site" description="N-linked (GlcNAc...) asparagine" evidence="3">
    <location>
        <position position="181"/>
    </location>
</feature>
<feature type="glycosylation site" description="N-linked (GlcNAc...) asparagine" evidence="3">
    <location>
        <position position="184"/>
    </location>
</feature>
<feature type="disulfide bond" evidence="2">
    <location>
        <begin position="164"/>
        <end position="173"/>
    </location>
</feature>
<feature type="sequence conflict" description="In Ref. 1; M92378." evidence="9" ref="1">
    <original>KL</original>
    <variation>NW</variation>
    <location>
        <begin position="117"/>
        <end position="118"/>
    </location>
</feature>
<feature type="sequence conflict" description="In Ref. 1; M92378." evidence="9" ref="1">
    <original>GL</original>
    <variation>AV</variation>
    <location>
        <begin position="126"/>
        <end position="127"/>
    </location>
</feature>
<feature type="sequence conflict" description="In Ref. 1; M92378." evidence="9" ref="1">
    <original>WP</original>
    <variation>C</variation>
    <location>
        <begin position="212"/>
        <end position="213"/>
    </location>
</feature>
<feature type="sequence conflict" description="In Ref. 1; M92378." evidence="9" ref="1">
    <original>WL</original>
    <variation>IF</variation>
    <location>
        <begin position="285"/>
        <end position="286"/>
    </location>
</feature>
<organism>
    <name type="scientific">Mus musculus</name>
    <name type="common">Mouse</name>
    <dbReference type="NCBI Taxonomy" id="10090"/>
    <lineage>
        <taxon>Eukaryota</taxon>
        <taxon>Metazoa</taxon>
        <taxon>Chordata</taxon>
        <taxon>Craniata</taxon>
        <taxon>Vertebrata</taxon>
        <taxon>Euteleostomi</taxon>
        <taxon>Mammalia</taxon>
        <taxon>Eutheria</taxon>
        <taxon>Euarchontoglires</taxon>
        <taxon>Glires</taxon>
        <taxon>Rodentia</taxon>
        <taxon>Myomorpha</taxon>
        <taxon>Muroidea</taxon>
        <taxon>Muridae</taxon>
        <taxon>Murinae</taxon>
        <taxon>Mus</taxon>
        <taxon>Mus</taxon>
    </lineage>
</organism>
<dbReference type="EMBL" id="M92377">
    <property type="status" value="NOT_ANNOTATED_CDS"/>
    <property type="molecule type" value="Genomic_DNA"/>
</dbReference>
<dbReference type="EMBL" id="M92378">
    <property type="status" value="NOT_ANNOTATED_CDS"/>
    <property type="molecule type" value="mRNA"/>
</dbReference>
<dbReference type="EMBL" id="AK042956">
    <property type="protein sequence ID" value="BAC31418.1"/>
    <property type="molecule type" value="mRNA"/>
</dbReference>
<dbReference type="EMBL" id="AK052971">
    <property type="protein sequence ID" value="BAC35226.1"/>
    <property type="molecule type" value="mRNA"/>
</dbReference>
<dbReference type="EMBL" id="AK053883">
    <property type="protein sequence ID" value="BAC35574.1"/>
    <property type="molecule type" value="mRNA"/>
</dbReference>
<dbReference type="CCDS" id="CCDS20434.1"/>
<dbReference type="PIR" id="F46027">
    <property type="entry name" value="F46027"/>
</dbReference>
<dbReference type="RefSeq" id="NP_848818.1">
    <property type="nucleotide sequence ID" value="NM_178703.5"/>
</dbReference>
<dbReference type="SMR" id="P31648"/>
<dbReference type="BioGRID" id="231239">
    <property type="interactions" value="87"/>
</dbReference>
<dbReference type="FunCoup" id="P31648">
    <property type="interactions" value="300"/>
</dbReference>
<dbReference type="IntAct" id="P31648">
    <property type="interactions" value="1"/>
</dbReference>
<dbReference type="MINT" id="P31648"/>
<dbReference type="STRING" id="10090.ENSMUSP00000032454"/>
<dbReference type="BindingDB" id="P31648"/>
<dbReference type="ChEMBL" id="CHEMBL5445"/>
<dbReference type="DrugCentral" id="P31648"/>
<dbReference type="GuidetoPHARMACOLOGY" id="929"/>
<dbReference type="GlyCosmos" id="P31648">
    <property type="glycosylation" value="3 sites, No reported glycans"/>
</dbReference>
<dbReference type="GlyGen" id="P31648">
    <property type="glycosylation" value="4 sites, 1 O-linked glycan (1 site)"/>
</dbReference>
<dbReference type="iPTMnet" id="P31648"/>
<dbReference type="PhosphoSitePlus" id="P31648"/>
<dbReference type="SwissPalm" id="P31648"/>
<dbReference type="PaxDb" id="10090-ENSMUSP00000032454"/>
<dbReference type="PeptideAtlas" id="P31648"/>
<dbReference type="ProteomicsDB" id="256737"/>
<dbReference type="Antibodypedia" id="1391">
    <property type="antibodies" value="269 antibodies from 33 providers"/>
</dbReference>
<dbReference type="DNASU" id="232333"/>
<dbReference type="Ensembl" id="ENSMUST00000032454.8">
    <property type="protein sequence ID" value="ENSMUSP00000032454.6"/>
    <property type="gene ID" value="ENSMUSG00000030310.12"/>
</dbReference>
<dbReference type="GeneID" id="232333"/>
<dbReference type="KEGG" id="mmu:232333"/>
<dbReference type="UCSC" id="uc009dhu.2">
    <property type="organism name" value="mouse"/>
</dbReference>
<dbReference type="AGR" id="MGI:95627"/>
<dbReference type="CTD" id="6529"/>
<dbReference type="MGI" id="MGI:95627">
    <property type="gene designation" value="Slc6a1"/>
</dbReference>
<dbReference type="VEuPathDB" id="HostDB:ENSMUSG00000030310"/>
<dbReference type="eggNOG" id="KOG3660">
    <property type="taxonomic scope" value="Eukaryota"/>
</dbReference>
<dbReference type="GeneTree" id="ENSGT00940000156027"/>
<dbReference type="HOGENOM" id="CLU_006855_9_5_1"/>
<dbReference type="InParanoid" id="P31648"/>
<dbReference type="OMA" id="FNNINHR"/>
<dbReference type="OrthoDB" id="6581954at2759"/>
<dbReference type="PhylomeDB" id="P31648"/>
<dbReference type="TreeFam" id="TF343812"/>
<dbReference type="Reactome" id="R-MMU-442660">
    <property type="pathway name" value="Na+/Cl- dependent neurotransmitter transporters"/>
</dbReference>
<dbReference type="Reactome" id="R-MMU-888593">
    <property type="pathway name" value="Reuptake of GABA"/>
</dbReference>
<dbReference type="BioGRID-ORCS" id="232333">
    <property type="hits" value="4 hits in 79 CRISPR screens"/>
</dbReference>
<dbReference type="CD-CODE" id="CE726F99">
    <property type="entry name" value="Postsynaptic density"/>
</dbReference>
<dbReference type="PRO" id="PR:P31648"/>
<dbReference type="Proteomes" id="UP000000589">
    <property type="component" value="Chromosome 6"/>
</dbReference>
<dbReference type="RNAct" id="P31648">
    <property type="molecule type" value="protein"/>
</dbReference>
<dbReference type="Bgee" id="ENSMUSG00000030310">
    <property type="expression patterns" value="Expressed in cerebellum lobe and 107 other cell types or tissues"/>
</dbReference>
<dbReference type="ExpressionAtlas" id="P31648">
    <property type="expression patterns" value="baseline and differential"/>
</dbReference>
<dbReference type="GO" id="GO:0030424">
    <property type="term" value="C:axon"/>
    <property type="evidence" value="ECO:0000314"/>
    <property type="project" value="ARUK-UCL"/>
</dbReference>
<dbReference type="GO" id="GO:0098982">
    <property type="term" value="C:GABA-ergic synapse"/>
    <property type="evidence" value="ECO:0000314"/>
    <property type="project" value="SynGO"/>
</dbReference>
<dbReference type="GO" id="GO:0043025">
    <property type="term" value="C:neuronal cell body"/>
    <property type="evidence" value="ECO:0000314"/>
    <property type="project" value="ARUK-UCL"/>
</dbReference>
<dbReference type="GO" id="GO:0005886">
    <property type="term" value="C:plasma membrane"/>
    <property type="evidence" value="ECO:0000314"/>
    <property type="project" value="MGI"/>
</dbReference>
<dbReference type="GO" id="GO:0098793">
    <property type="term" value="C:presynapse"/>
    <property type="evidence" value="ECO:0007669"/>
    <property type="project" value="UniProtKB-SubCell"/>
</dbReference>
<dbReference type="GO" id="GO:0005283">
    <property type="term" value="F:amino acid:sodium symporter activity"/>
    <property type="evidence" value="ECO:0000314"/>
    <property type="project" value="UniProtKB"/>
</dbReference>
<dbReference type="GO" id="GO:0015185">
    <property type="term" value="F:gamma-aminobutyric acid transmembrane transporter activity"/>
    <property type="evidence" value="ECO:0000315"/>
    <property type="project" value="ARUK-UCL"/>
</dbReference>
<dbReference type="GO" id="GO:0005332">
    <property type="term" value="F:gamma-aminobutyric acid:sodium:chloride symporter activity"/>
    <property type="evidence" value="ECO:0000314"/>
    <property type="project" value="UniProtKB"/>
</dbReference>
<dbReference type="GO" id="GO:0046872">
    <property type="term" value="F:metal ion binding"/>
    <property type="evidence" value="ECO:0007669"/>
    <property type="project" value="UniProtKB-KW"/>
</dbReference>
<dbReference type="GO" id="GO:0008306">
    <property type="term" value="P:associative learning"/>
    <property type="evidence" value="ECO:0000315"/>
    <property type="project" value="ARUK-UCL"/>
</dbReference>
<dbReference type="GO" id="GO:0051939">
    <property type="term" value="P:gamma-aminobutyric acid import"/>
    <property type="evidence" value="ECO:0000315"/>
    <property type="project" value="ARUK-UCL"/>
</dbReference>
<dbReference type="GO" id="GO:0098658">
    <property type="term" value="P:inorganic anion import across plasma membrane"/>
    <property type="evidence" value="ECO:0007669"/>
    <property type="project" value="Ensembl"/>
</dbReference>
<dbReference type="GO" id="GO:0007613">
    <property type="term" value="P:memory"/>
    <property type="evidence" value="ECO:0000315"/>
    <property type="project" value="ARUK-UCL"/>
</dbReference>
<dbReference type="GO" id="GO:0098810">
    <property type="term" value="P:neurotransmitter reuptake"/>
    <property type="evidence" value="ECO:0000314"/>
    <property type="project" value="SynGO"/>
</dbReference>
<dbReference type="GO" id="GO:0098719">
    <property type="term" value="P:sodium ion import across plasma membrane"/>
    <property type="evidence" value="ECO:0007669"/>
    <property type="project" value="Ensembl"/>
</dbReference>
<dbReference type="GO" id="GO:0050808">
    <property type="term" value="P:synapse organization"/>
    <property type="evidence" value="ECO:0000315"/>
    <property type="project" value="ARUK-UCL"/>
</dbReference>
<dbReference type="CDD" id="cd11506">
    <property type="entry name" value="SLC6sbd_GAT1"/>
    <property type="match status" value="1"/>
</dbReference>
<dbReference type="InterPro" id="IPR000175">
    <property type="entry name" value="Na/ntran_symport"/>
</dbReference>
<dbReference type="InterPro" id="IPR002980">
    <property type="entry name" value="Na/ntran_symport_GABA_GAT1"/>
</dbReference>
<dbReference type="InterPro" id="IPR037272">
    <property type="entry name" value="SNS_sf"/>
</dbReference>
<dbReference type="NCBIfam" id="NF037979">
    <property type="entry name" value="Na_transp"/>
    <property type="match status" value="1"/>
</dbReference>
<dbReference type="PANTHER" id="PTHR11616:SF138">
    <property type="entry name" value="SODIUM- AND CHLORIDE-DEPENDENT GABA TRANSPORTER 1"/>
    <property type="match status" value="1"/>
</dbReference>
<dbReference type="PANTHER" id="PTHR11616">
    <property type="entry name" value="SODIUM/CHLORIDE DEPENDENT TRANSPORTER"/>
    <property type="match status" value="1"/>
</dbReference>
<dbReference type="Pfam" id="PF00209">
    <property type="entry name" value="SNF"/>
    <property type="match status" value="1"/>
</dbReference>
<dbReference type="PRINTS" id="PR01195">
    <property type="entry name" value="GAT1TRNSPORT"/>
</dbReference>
<dbReference type="PRINTS" id="PR00176">
    <property type="entry name" value="NANEUSMPORT"/>
</dbReference>
<dbReference type="SUPFAM" id="SSF161070">
    <property type="entry name" value="SNF-like"/>
    <property type="match status" value="1"/>
</dbReference>
<dbReference type="PROSITE" id="PS00610">
    <property type="entry name" value="NA_NEUROTRAN_SYMP_1"/>
    <property type="match status" value="1"/>
</dbReference>
<dbReference type="PROSITE" id="PS00754">
    <property type="entry name" value="NA_NEUROTRAN_SYMP_2"/>
    <property type="match status" value="1"/>
</dbReference>
<dbReference type="PROSITE" id="PS50267">
    <property type="entry name" value="NA_NEUROTRAN_SYMP_3"/>
    <property type="match status" value="1"/>
</dbReference>
<protein>
    <recommendedName>
        <fullName>Sodium- and chloride-dependent GABA transporter 1</fullName>
        <shortName>GAT-1</shortName>
    </recommendedName>
    <alternativeName>
        <fullName>Solute carrier family 6 member 1</fullName>
    </alternativeName>
</protein>
<keyword id="KW-1003">Cell membrane</keyword>
<keyword id="KW-0966">Cell projection</keyword>
<keyword id="KW-1015">Disulfide bond</keyword>
<keyword id="KW-0325">Glycoprotein</keyword>
<keyword id="KW-0472">Membrane</keyword>
<keyword id="KW-0479">Metal-binding</keyword>
<keyword id="KW-0532">Neurotransmitter transport</keyword>
<keyword id="KW-0597">Phosphoprotein</keyword>
<keyword id="KW-1185">Reference proteome</keyword>
<keyword id="KW-0915">Sodium</keyword>
<keyword id="KW-0769">Symport</keyword>
<keyword id="KW-0770">Synapse</keyword>
<keyword id="KW-0812">Transmembrane</keyword>
<keyword id="KW-1133">Transmembrane helix</keyword>
<keyword id="KW-0813">Transport</keyword>
<name>SC6A1_MOUSE</name>
<comment type="function">
    <text evidence="1 5 6 7 8">Mediates transport of gamma-aminobutyric acid (GABA) together with sodium and chloride and is responsible for the reuptake of GABA from the synapse (PubMed:15234345, PubMed:16150932, PubMed:30270321, PubMed:8420981). The translocation of GABA, however, may also occur in the reverse direction leading to the release of GABA (By similarity). The direction and magnitude of GABA transport is a consequence of the prevailing thermodynamic conditions, determined by membrane potential and the intracellular and extracellular concentrations of Na(+), Cl(-) and GABA (By similarity). Can also mediate sodium- and chloride-dependent transport of hypotaurine but to a much lower extent as compared to GABA (PubMed:30270321).</text>
</comment>
<comment type="catalytic activity">
    <reaction evidence="5 6 7 8">
        <text>4-aminobutanoate(out) + chloride(out) + 2 Na(+)(out) = 4-aminobutanoate(in) + chloride(in) + 2 Na(+)(in)</text>
        <dbReference type="Rhea" id="RHEA:70687"/>
        <dbReference type="ChEBI" id="CHEBI:17996"/>
        <dbReference type="ChEBI" id="CHEBI:29101"/>
        <dbReference type="ChEBI" id="CHEBI:59888"/>
    </reaction>
    <physiologicalReaction direction="left-to-right" evidence="10">
        <dbReference type="Rhea" id="RHEA:70688"/>
    </physiologicalReaction>
    <physiologicalReaction direction="right-to-left" evidence="1">
        <dbReference type="Rhea" id="RHEA:70689"/>
    </physiologicalReaction>
</comment>
<comment type="catalytic activity">
    <reaction evidence="7">
        <text>hypotaurine(out) + chloride(out) + 2 Na(+)(out) = hypotaurine(in) + chloride(in) + 2 Na(+)(in)</text>
        <dbReference type="Rhea" id="RHEA:71243"/>
        <dbReference type="ChEBI" id="CHEBI:17996"/>
        <dbReference type="ChEBI" id="CHEBI:29101"/>
        <dbReference type="ChEBI" id="CHEBI:57853"/>
    </reaction>
    <physiologicalReaction direction="left-to-right" evidence="11">
        <dbReference type="Rhea" id="RHEA:71244"/>
    </physiologicalReaction>
</comment>
<comment type="activity regulation">
    <text evidence="6 8">Inhibited by N-[4,4-Diphenyl-3-butenyl]-nipecotic acid (SKF-89976-A), L-2,4-diamino-n-butyric acid, guvacine and nipecotic acid.</text>
</comment>
<comment type="biophysicochemical properties">
    <kinetics>
        <KM evidence="6">62 uM for GABA</KM>
    </kinetics>
</comment>
<comment type="subunit">
    <text evidence="5">Interacts (via PDZ domain-binding motif) with PALS1; interaction increases SLC6A1-mediated GABA uptake.</text>
</comment>
<comment type="subcellular location">
    <subcellularLocation>
        <location evidence="1">Cell membrane</location>
        <topology evidence="3">Multi-pass membrane protein</topology>
    </subcellularLocation>
    <subcellularLocation>
        <location evidence="5">Presynapse</location>
    </subcellularLocation>
    <text evidence="5">Localized at the presynaptic terminals of interneurons.</text>
</comment>
<comment type="tissue specificity">
    <text evidence="5">Brain. Expressed in the dentate gyrus of hippocampus, striatum and cerebellum (at protein level).</text>
</comment>
<comment type="miscellaneous">
    <text>This protein is the target of psychomotor stimulants such as amphetamines or cocaine.</text>
</comment>
<comment type="similarity">
    <text evidence="9">Belongs to the sodium:neurotransmitter symporter (SNF) (TC 2.A.22) family. SLC6A1 subfamily.</text>
</comment>
<sequence length="599" mass="67001">MATDNSKVADGQISTEVSEAPVASDKPKTLVVKVQKKAGDLPDRDTWKGRFDFLMSCVGYAIGLGNVWRFPYLCGKNGGGAFLIPYFLTLIFAGVPLFLLECSLGQYTSIGGLGVWKLAPMFKGVGLAAAVLSFWLNIYYIVIISWAIYYLYNSFTTTLPWKQCDNPWNTDRCFSNYSLVNTTNMTSAVVEFWERNMHQMTDGLDKPGQIRWPLAITLAIAWVLVYFCIWKGVGWTGKVVYFSATYPYIMLIILFFRGVTLPGAKEGILFYITPNFRKLSDSEVWLDAATQIFFSYGLGLGSLIALGSYNSFHNNVYRDSIIVCCINSCTSMFAGFVIFSIVGFMAHVTKRSIADVAASGPGLAFLAYPEAVTQLPISPLWAILFFSMLLMLGIDSQFCTVEGFITALVDEYPRLLRNRRELFIAAVCIVSYLIGLSNITQGGIYVFKLFDYYSASGMSLLFLVFFECVSISWFYGVNRFYDNIQEMVGSRPCIWWKLCWSFFTPIIVAGVFLFSAVQMTPLTMGSYVFPKWGQGVGWLMALSSMVLIPGYMAYMFLTLKGSLKQRLQVMIQPSEDIVRPENGPEQPQAGSSASKEAYI</sequence>
<gene>
    <name type="primary">Slc6a1</name>
    <name type="synonym">Gabt1</name>
    <name type="synonym">Gat-1</name>
    <name type="synonym">Gat1</name>
</gene>
<proteinExistence type="evidence at protein level"/>
<accession>P31648</accession>